<proteinExistence type="inferred from homology"/>
<accession>A1KMM6</accession>
<comment type="function">
    <text evidence="1">Responsible for the release of ribosomes from messenger RNA at the termination of protein biosynthesis. May increase the efficiency of translation by recycling ribosomes from one round of translation to another.</text>
</comment>
<comment type="subcellular location">
    <subcellularLocation>
        <location evidence="1">Cytoplasm</location>
    </subcellularLocation>
</comment>
<comment type="similarity">
    <text evidence="1">Belongs to the RRF family.</text>
</comment>
<reference key="1">
    <citation type="journal article" date="2007" name="Proc. Natl. Acad. Sci. U.S.A.">
        <title>Genome plasticity of BCG and impact on vaccine efficacy.</title>
        <authorList>
            <person name="Brosch R."/>
            <person name="Gordon S.V."/>
            <person name="Garnier T."/>
            <person name="Eiglmeier K."/>
            <person name="Frigui W."/>
            <person name="Valenti P."/>
            <person name="Dos Santos S."/>
            <person name="Duthoy S."/>
            <person name="Lacroix C."/>
            <person name="Garcia-Pelayo C."/>
            <person name="Inwald J.K."/>
            <person name="Golby P."/>
            <person name="Garcia J.N."/>
            <person name="Hewinson R.G."/>
            <person name="Behr M.A."/>
            <person name="Quail M.A."/>
            <person name="Churcher C."/>
            <person name="Barrell B.G."/>
            <person name="Parkhill J."/>
            <person name="Cole S.T."/>
        </authorList>
    </citation>
    <scope>NUCLEOTIDE SEQUENCE [LARGE SCALE GENOMIC DNA]</scope>
    <source>
        <strain>BCG / Pasteur 1173P2</strain>
    </source>
</reference>
<dbReference type="EMBL" id="AM408590">
    <property type="protein sequence ID" value="CAL72892.1"/>
    <property type="molecule type" value="Genomic_DNA"/>
</dbReference>
<dbReference type="RefSeq" id="WP_011799300.1">
    <property type="nucleotide sequence ID" value="NC_008769.1"/>
</dbReference>
<dbReference type="SMR" id="A1KMM6"/>
<dbReference type="KEGG" id="mbb:BCG_2903c"/>
<dbReference type="HOGENOM" id="CLU_073981_2_0_11"/>
<dbReference type="Proteomes" id="UP000001472">
    <property type="component" value="Chromosome"/>
</dbReference>
<dbReference type="GO" id="GO:0005737">
    <property type="term" value="C:cytoplasm"/>
    <property type="evidence" value="ECO:0007669"/>
    <property type="project" value="UniProtKB-SubCell"/>
</dbReference>
<dbReference type="GO" id="GO:0043023">
    <property type="term" value="F:ribosomal large subunit binding"/>
    <property type="evidence" value="ECO:0007669"/>
    <property type="project" value="TreeGrafter"/>
</dbReference>
<dbReference type="GO" id="GO:0006415">
    <property type="term" value="P:translational termination"/>
    <property type="evidence" value="ECO:0007669"/>
    <property type="project" value="UniProtKB-UniRule"/>
</dbReference>
<dbReference type="CDD" id="cd00520">
    <property type="entry name" value="RRF"/>
    <property type="match status" value="1"/>
</dbReference>
<dbReference type="FunFam" id="1.10.132.20:FF:000001">
    <property type="entry name" value="Ribosome-recycling factor"/>
    <property type="match status" value="1"/>
</dbReference>
<dbReference type="FunFam" id="3.30.1360.40:FF:000001">
    <property type="entry name" value="Ribosome-recycling factor"/>
    <property type="match status" value="1"/>
</dbReference>
<dbReference type="Gene3D" id="3.30.1360.40">
    <property type="match status" value="1"/>
</dbReference>
<dbReference type="Gene3D" id="1.10.132.20">
    <property type="entry name" value="Ribosome-recycling factor"/>
    <property type="match status" value="1"/>
</dbReference>
<dbReference type="HAMAP" id="MF_00040">
    <property type="entry name" value="RRF"/>
    <property type="match status" value="1"/>
</dbReference>
<dbReference type="InterPro" id="IPR002661">
    <property type="entry name" value="Ribosome_recyc_fac"/>
</dbReference>
<dbReference type="InterPro" id="IPR023584">
    <property type="entry name" value="Ribosome_recyc_fac_dom"/>
</dbReference>
<dbReference type="InterPro" id="IPR036191">
    <property type="entry name" value="RRF_sf"/>
</dbReference>
<dbReference type="NCBIfam" id="TIGR00496">
    <property type="entry name" value="frr"/>
    <property type="match status" value="1"/>
</dbReference>
<dbReference type="PANTHER" id="PTHR20982:SF3">
    <property type="entry name" value="MITOCHONDRIAL RIBOSOME RECYCLING FACTOR PSEUDO 1"/>
    <property type="match status" value="1"/>
</dbReference>
<dbReference type="PANTHER" id="PTHR20982">
    <property type="entry name" value="RIBOSOME RECYCLING FACTOR"/>
    <property type="match status" value="1"/>
</dbReference>
<dbReference type="Pfam" id="PF01765">
    <property type="entry name" value="RRF"/>
    <property type="match status" value="1"/>
</dbReference>
<dbReference type="SUPFAM" id="SSF55194">
    <property type="entry name" value="Ribosome recycling factor, RRF"/>
    <property type="match status" value="1"/>
</dbReference>
<organism>
    <name type="scientific">Mycobacterium bovis (strain BCG / Pasteur 1173P2)</name>
    <dbReference type="NCBI Taxonomy" id="410289"/>
    <lineage>
        <taxon>Bacteria</taxon>
        <taxon>Bacillati</taxon>
        <taxon>Actinomycetota</taxon>
        <taxon>Actinomycetes</taxon>
        <taxon>Mycobacteriales</taxon>
        <taxon>Mycobacteriaceae</taxon>
        <taxon>Mycobacterium</taxon>
        <taxon>Mycobacterium tuberculosis complex</taxon>
    </lineage>
</organism>
<gene>
    <name evidence="1" type="primary">frr</name>
    <name type="ordered locus">BCG_2903c</name>
</gene>
<evidence type="ECO:0000255" key="1">
    <source>
        <dbReference type="HAMAP-Rule" id="MF_00040"/>
    </source>
</evidence>
<feature type="chain" id="PRO_1000003199" description="Ribosome-recycling factor">
    <location>
        <begin position="1"/>
        <end position="185"/>
    </location>
</feature>
<protein>
    <recommendedName>
        <fullName evidence="1">Ribosome-recycling factor</fullName>
        <shortName evidence="1">RRF</shortName>
    </recommendedName>
    <alternativeName>
        <fullName evidence="1">Ribosome-releasing factor</fullName>
    </alternativeName>
</protein>
<sequence>MIDEALFDAEEKMEKAVAVARDDLSTIRTGRANPGMFSRITIDYYGAATLITQLASINVPEARLVVIKPYEANQLRAIETAIRNSDLGVNPTNDGALIRVAVPQLTEERRRELVKQAKHKGEEAKVSVRNIRRKAMEELHRIRKEGEAGEDEVGRAEKDLDKTTHQYVTQIDELVKHKEGELLEV</sequence>
<keyword id="KW-0963">Cytoplasm</keyword>
<keyword id="KW-0648">Protein biosynthesis</keyword>
<name>RRF_MYCBP</name>